<dbReference type="EMBL" id="U18466">
    <property type="protein sequence ID" value="AAA65236.1"/>
    <property type="molecule type" value="Genomic_DNA"/>
</dbReference>
<dbReference type="EMBL" id="U18466">
    <property type="protein sequence ID" value="AAA65386.1"/>
    <property type="molecule type" value="Genomic_DNA"/>
</dbReference>
<dbReference type="RefSeq" id="NP_042700.1">
    <property type="nucleotide sequence ID" value="NC_001659.2"/>
</dbReference>
<dbReference type="RefSeq" id="NP_042850.1">
    <property type="nucleotide sequence ID" value="NC_001659.2"/>
</dbReference>
<dbReference type="GeneID" id="22220386"/>
<dbReference type="GeneID" id="22220390"/>
<dbReference type="KEGG" id="vg:22220386"/>
<dbReference type="KEGG" id="vg:22220390"/>
<dbReference type="Proteomes" id="UP000000624">
    <property type="component" value="Segment"/>
</dbReference>
<organism>
    <name type="scientific">African swine fever virus (strain Badajoz 1971 Vero-adapted)</name>
    <name type="common">Ba71V</name>
    <name type="synonym">ASFV</name>
    <dbReference type="NCBI Taxonomy" id="10498"/>
    <lineage>
        <taxon>Viruses</taxon>
        <taxon>Varidnaviria</taxon>
        <taxon>Bamfordvirae</taxon>
        <taxon>Nucleocytoviricota</taxon>
        <taxon>Pokkesviricetes</taxon>
        <taxon>Asfuvirales</taxon>
        <taxon>Asfarviridae</taxon>
        <taxon>Asfivirus</taxon>
        <taxon>African swine fever virus</taxon>
    </lineage>
</organism>
<gene>
    <name type="ordered locus">BA71V-001</name>
    <name type="ORF">KP86R</name>
</gene>
<gene>
    <name type="ordered locus">BA71V-160</name>
    <name type="ORF">DP86L</name>
</gene>
<protein>
    <recommendedName>
        <fullName>Uncharacterized protein KP86R/DP86L</fullName>
    </recommendedName>
</protein>
<accession>Q89667</accession>
<keyword id="KW-1185">Reference proteome</keyword>
<comment type="miscellaneous">
    <text>Encoded by inverted terminal repeats (ITR) sequences.</text>
</comment>
<organismHost>
    <name type="scientific">Ornithodoros</name>
    <name type="common">relapsing fever ticks</name>
    <dbReference type="NCBI Taxonomy" id="6937"/>
</organismHost>
<organismHost>
    <name type="scientific">Sus scrofa</name>
    <name type="common">Pig</name>
    <dbReference type="NCBI Taxonomy" id="9823"/>
</organismHost>
<sequence>MGINQSQHSMGVNQSHHFMGVNQSHHFMGINQSQHSMGVNQHIIGDSYLISCMVVAPCCLKACMVLAPCCLKACMVLAPCCLKAAR</sequence>
<feature type="chain" id="PRO_0000373383" description="Uncharacterized protein KP86R/DP86L">
    <location>
        <begin position="1"/>
        <end position="86"/>
    </location>
</feature>
<proteinExistence type="predicted"/>
<reference key="1">
    <citation type="journal article" date="1995" name="Virology">
        <title>Analysis of the complete nucleotide sequence of African swine fever virus.</title>
        <authorList>
            <person name="Yanez R.J."/>
            <person name="Rodriguez J.M."/>
            <person name="Nogal M.L."/>
            <person name="Yuste L."/>
            <person name="Enriquez C."/>
            <person name="Rodriguez J.F."/>
            <person name="Vinuela E."/>
        </authorList>
    </citation>
    <scope>NUCLEOTIDE SEQUENCE [LARGE SCALE GENOMIC DNA]</scope>
</reference>
<name>KP86R_ASFB7</name>